<keyword id="KW-0963">Cytoplasm</keyword>
<keyword id="KW-0648">Protein biosynthesis</keyword>
<keyword id="KW-1185">Reference proteome</keyword>
<accession>C3MBQ5</accession>
<dbReference type="EMBL" id="CP001389">
    <property type="protein sequence ID" value="ACP25117.1"/>
    <property type="molecule type" value="Genomic_DNA"/>
</dbReference>
<dbReference type="RefSeq" id="WP_012707893.1">
    <property type="nucleotide sequence ID" value="NC_012587.1"/>
</dbReference>
<dbReference type="RefSeq" id="YP_002825870.1">
    <property type="nucleotide sequence ID" value="NC_012587.1"/>
</dbReference>
<dbReference type="SMR" id="C3MBQ5"/>
<dbReference type="STRING" id="394.NGR_c13370"/>
<dbReference type="KEGG" id="rhi:NGR_c13370"/>
<dbReference type="PATRIC" id="fig|394.7.peg.4158"/>
<dbReference type="eggNOG" id="COG0233">
    <property type="taxonomic scope" value="Bacteria"/>
</dbReference>
<dbReference type="HOGENOM" id="CLU_073981_2_0_5"/>
<dbReference type="OrthoDB" id="9804006at2"/>
<dbReference type="Proteomes" id="UP000001054">
    <property type="component" value="Chromosome"/>
</dbReference>
<dbReference type="GO" id="GO:0005829">
    <property type="term" value="C:cytosol"/>
    <property type="evidence" value="ECO:0007669"/>
    <property type="project" value="GOC"/>
</dbReference>
<dbReference type="GO" id="GO:0043023">
    <property type="term" value="F:ribosomal large subunit binding"/>
    <property type="evidence" value="ECO:0007669"/>
    <property type="project" value="TreeGrafter"/>
</dbReference>
<dbReference type="GO" id="GO:0002184">
    <property type="term" value="P:cytoplasmic translational termination"/>
    <property type="evidence" value="ECO:0007669"/>
    <property type="project" value="TreeGrafter"/>
</dbReference>
<dbReference type="CDD" id="cd00520">
    <property type="entry name" value="RRF"/>
    <property type="match status" value="1"/>
</dbReference>
<dbReference type="FunFam" id="1.10.132.20:FF:000001">
    <property type="entry name" value="Ribosome-recycling factor"/>
    <property type="match status" value="1"/>
</dbReference>
<dbReference type="FunFam" id="3.30.1360.40:FF:000001">
    <property type="entry name" value="Ribosome-recycling factor"/>
    <property type="match status" value="1"/>
</dbReference>
<dbReference type="Gene3D" id="3.30.1360.40">
    <property type="match status" value="1"/>
</dbReference>
<dbReference type="Gene3D" id="1.10.132.20">
    <property type="entry name" value="Ribosome-recycling factor"/>
    <property type="match status" value="1"/>
</dbReference>
<dbReference type="HAMAP" id="MF_00040">
    <property type="entry name" value="RRF"/>
    <property type="match status" value="1"/>
</dbReference>
<dbReference type="InterPro" id="IPR002661">
    <property type="entry name" value="Ribosome_recyc_fac"/>
</dbReference>
<dbReference type="InterPro" id="IPR023584">
    <property type="entry name" value="Ribosome_recyc_fac_dom"/>
</dbReference>
<dbReference type="InterPro" id="IPR036191">
    <property type="entry name" value="RRF_sf"/>
</dbReference>
<dbReference type="NCBIfam" id="TIGR00496">
    <property type="entry name" value="frr"/>
    <property type="match status" value="1"/>
</dbReference>
<dbReference type="PANTHER" id="PTHR20982:SF3">
    <property type="entry name" value="MITOCHONDRIAL RIBOSOME RECYCLING FACTOR PSEUDO 1"/>
    <property type="match status" value="1"/>
</dbReference>
<dbReference type="PANTHER" id="PTHR20982">
    <property type="entry name" value="RIBOSOME RECYCLING FACTOR"/>
    <property type="match status" value="1"/>
</dbReference>
<dbReference type="Pfam" id="PF01765">
    <property type="entry name" value="RRF"/>
    <property type="match status" value="1"/>
</dbReference>
<dbReference type="SUPFAM" id="SSF55194">
    <property type="entry name" value="Ribosome recycling factor, RRF"/>
    <property type="match status" value="1"/>
</dbReference>
<comment type="function">
    <text evidence="1">Responsible for the release of ribosomes from messenger RNA at the termination of protein biosynthesis. May increase the efficiency of translation by recycling ribosomes from one round of translation to another.</text>
</comment>
<comment type="subcellular location">
    <subcellularLocation>
        <location evidence="1">Cytoplasm</location>
    </subcellularLocation>
</comment>
<comment type="similarity">
    <text evidence="1">Belongs to the RRF family.</text>
</comment>
<proteinExistence type="inferred from homology"/>
<protein>
    <recommendedName>
        <fullName evidence="1">Ribosome-recycling factor</fullName>
        <shortName evidence="1">RRF</shortName>
    </recommendedName>
    <alternativeName>
        <fullName evidence="1">Ribosome-releasing factor</fullName>
    </alternativeName>
</protein>
<name>RRF_SINFN</name>
<gene>
    <name evidence="1" type="primary">frr</name>
    <name type="ordered locus">NGR_c13370</name>
</gene>
<reference key="1">
    <citation type="journal article" date="2009" name="Appl. Environ. Microbiol.">
        <title>Rhizobium sp. strain NGR234 possesses a remarkable number of secretion systems.</title>
        <authorList>
            <person name="Schmeisser C."/>
            <person name="Liesegang H."/>
            <person name="Krysciak D."/>
            <person name="Bakkou N."/>
            <person name="Le Quere A."/>
            <person name="Wollherr A."/>
            <person name="Heinemeyer I."/>
            <person name="Morgenstern B."/>
            <person name="Pommerening-Roeser A."/>
            <person name="Flores M."/>
            <person name="Palacios R."/>
            <person name="Brenner S."/>
            <person name="Gottschalk G."/>
            <person name="Schmitz R.A."/>
            <person name="Broughton W.J."/>
            <person name="Perret X."/>
            <person name="Strittmatter A.W."/>
            <person name="Streit W.R."/>
        </authorList>
    </citation>
    <scope>NUCLEOTIDE SEQUENCE [LARGE SCALE GENOMIC DNA]</scope>
    <source>
        <strain>NBRC 101917 / NGR234</strain>
    </source>
</reference>
<evidence type="ECO:0000255" key="1">
    <source>
        <dbReference type="HAMAP-Rule" id="MF_00040"/>
    </source>
</evidence>
<evidence type="ECO:0000256" key="2">
    <source>
        <dbReference type="SAM" id="MobiDB-lite"/>
    </source>
</evidence>
<sequence>MSEGVELKELKRRMDGAIAAFKHDIASLRTGRASANVLDPVTVEAYGSRMPLNQVANIMVPEPRMLSVSVWDKTMVGAVDRAIRESNLGLNPIIDGQNLRIPLPELNEERRKSLVKVAHDYAEKSKVAVRHVRRDGMDGLKKAEKDGDIGQDESRAQSERVQKMTDEVISEIDRLLAEKEKEIMQV</sequence>
<organism>
    <name type="scientific">Sinorhizobium fredii (strain NBRC 101917 / NGR234)</name>
    <dbReference type="NCBI Taxonomy" id="394"/>
    <lineage>
        <taxon>Bacteria</taxon>
        <taxon>Pseudomonadati</taxon>
        <taxon>Pseudomonadota</taxon>
        <taxon>Alphaproteobacteria</taxon>
        <taxon>Hyphomicrobiales</taxon>
        <taxon>Rhizobiaceae</taxon>
        <taxon>Sinorhizobium/Ensifer group</taxon>
        <taxon>Sinorhizobium</taxon>
    </lineage>
</organism>
<feature type="chain" id="PRO_1000194946" description="Ribosome-recycling factor">
    <location>
        <begin position="1"/>
        <end position="186"/>
    </location>
</feature>
<feature type="region of interest" description="Disordered" evidence="2">
    <location>
        <begin position="135"/>
        <end position="162"/>
    </location>
</feature>